<reference key="1">
    <citation type="journal article" date="2005" name="BMC Genomics">
        <title>Characterization of 954 bovine full-CDS cDNA sequences.</title>
        <authorList>
            <person name="Harhay G.P."/>
            <person name="Sonstegard T.S."/>
            <person name="Keele J.W."/>
            <person name="Heaton M.P."/>
            <person name="Clawson M.L."/>
            <person name="Snelling W.M."/>
            <person name="Wiedmann R.T."/>
            <person name="Van Tassell C.P."/>
            <person name="Smith T.P.L."/>
        </authorList>
    </citation>
    <scope>NUCLEOTIDE SEQUENCE [LARGE SCALE MRNA]</scope>
</reference>
<evidence type="ECO:0000250" key="1">
    <source>
        <dbReference type="UniProtKB" id="Q9WUM5"/>
    </source>
</evidence>
<evidence type="ECO:0000255" key="2">
    <source>
        <dbReference type="HAMAP-Rule" id="MF_03222"/>
    </source>
</evidence>
<feature type="transit peptide" description="Mitochondrion" evidence="2">
    <location>
        <begin position="1"/>
        <end position="27"/>
    </location>
</feature>
<feature type="chain" id="PRO_0000270820" description="Succinate--CoA ligase [ADP/GDP-forming] subunit alpha, mitochondrial" evidence="2">
    <location>
        <begin position="28"/>
        <end position="346"/>
    </location>
</feature>
<feature type="active site" description="Tele-phosphohistidine intermediate" evidence="2">
    <location>
        <position position="299"/>
    </location>
</feature>
<feature type="binding site" evidence="2">
    <location>
        <begin position="64"/>
        <end position="67"/>
    </location>
    <ligand>
        <name>CoA</name>
        <dbReference type="ChEBI" id="CHEBI:57287"/>
    </ligand>
</feature>
<feature type="binding site" evidence="2">
    <location>
        <position position="90"/>
    </location>
    <ligand>
        <name>CoA</name>
        <dbReference type="ChEBI" id="CHEBI:57287"/>
    </ligand>
</feature>
<feature type="binding site" evidence="2">
    <location>
        <begin position="143"/>
        <end position="145"/>
    </location>
    <ligand>
        <name>CoA</name>
        <dbReference type="ChEBI" id="CHEBI:57287"/>
    </ligand>
</feature>
<feature type="binding site" evidence="2">
    <location>
        <position position="207"/>
    </location>
    <ligand>
        <name>substrate</name>
        <note>ligand shared with subunit beta</note>
    </ligand>
</feature>
<feature type="modified residue" description="N6-acetyllysine; alternate" evidence="1">
    <location>
        <position position="57"/>
    </location>
</feature>
<feature type="modified residue" description="N6-succinyllysine; alternate" evidence="1">
    <location>
        <position position="57"/>
    </location>
</feature>
<feature type="modified residue" description="N6-acetyllysine; alternate" evidence="1">
    <location>
        <position position="66"/>
    </location>
</feature>
<feature type="modified residue" description="N6-succinyllysine; alternate" evidence="1">
    <location>
        <position position="66"/>
    </location>
</feature>
<feature type="modified residue" description="N6-acetyllysine" evidence="1">
    <location>
        <position position="81"/>
    </location>
</feature>
<feature type="modified residue" description="N6-acetyllysine" evidence="1">
    <location>
        <position position="105"/>
    </location>
</feature>
<feature type="modified residue" description="N6-succinyllysine" evidence="1">
    <location>
        <position position="338"/>
    </location>
</feature>
<dbReference type="EC" id="6.2.1.4" evidence="2"/>
<dbReference type="EC" id="6.2.1.5" evidence="2"/>
<dbReference type="EMBL" id="BT021529">
    <property type="protein sequence ID" value="AAX46376.1"/>
    <property type="molecule type" value="mRNA"/>
</dbReference>
<dbReference type="RefSeq" id="NP_001030254.1">
    <property type="nucleotide sequence ID" value="NM_001035082.1"/>
</dbReference>
<dbReference type="SMR" id="Q58DR8"/>
<dbReference type="FunCoup" id="Q58DR8">
    <property type="interactions" value="2290"/>
</dbReference>
<dbReference type="IntAct" id="Q58DR8">
    <property type="interactions" value="1"/>
</dbReference>
<dbReference type="STRING" id="9913.ENSBTAP00000007982"/>
<dbReference type="PaxDb" id="9913-ENSBTAP00000007982"/>
<dbReference type="PeptideAtlas" id="Q58DR8"/>
<dbReference type="GeneID" id="509983"/>
<dbReference type="KEGG" id="bta:509983"/>
<dbReference type="CTD" id="8802"/>
<dbReference type="eggNOG" id="KOG1255">
    <property type="taxonomic scope" value="Eukaryota"/>
</dbReference>
<dbReference type="InParanoid" id="Q58DR8"/>
<dbReference type="OrthoDB" id="1664372at2759"/>
<dbReference type="UniPathway" id="UPA00223">
    <property type="reaction ID" value="UER00999"/>
</dbReference>
<dbReference type="Proteomes" id="UP000009136">
    <property type="component" value="Unplaced"/>
</dbReference>
<dbReference type="GO" id="GO:0005739">
    <property type="term" value="C:mitochondrion"/>
    <property type="evidence" value="ECO:0000318"/>
    <property type="project" value="GO_Central"/>
</dbReference>
<dbReference type="GO" id="GO:0009361">
    <property type="term" value="C:succinate-CoA ligase complex (ADP-forming)"/>
    <property type="evidence" value="ECO:0000318"/>
    <property type="project" value="GO_Central"/>
</dbReference>
<dbReference type="GO" id="GO:0000166">
    <property type="term" value="F:nucleotide binding"/>
    <property type="evidence" value="ECO:0007669"/>
    <property type="project" value="UniProtKB-KW"/>
</dbReference>
<dbReference type="GO" id="GO:0004775">
    <property type="term" value="F:succinate-CoA ligase (ADP-forming) activity"/>
    <property type="evidence" value="ECO:0000318"/>
    <property type="project" value="GO_Central"/>
</dbReference>
<dbReference type="GO" id="GO:0004776">
    <property type="term" value="F:succinate-CoA ligase (GDP-forming) activity"/>
    <property type="evidence" value="ECO:0000318"/>
    <property type="project" value="GO_Central"/>
</dbReference>
<dbReference type="GO" id="GO:0006099">
    <property type="term" value="P:tricarboxylic acid cycle"/>
    <property type="evidence" value="ECO:0000318"/>
    <property type="project" value="GO_Central"/>
</dbReference>
<dbReference type="FunFam" id="3.40.50.720:FF:000002">
    <property type="entry name" value="Succinate--CoA ligase [ADP-forming] subunit alpha"/>
    <property type="match status" value="1"/>
</dbReference>
<dbReference type="FunFam" id="3.40.50.261:FF:000005">
    <property type="entry name" value="Succinate--CoA ligase [ADP-forming] subunit alpha, mitochondrial"/>
    <property type="match status" value="1"/>
</dbReference>
<dbReference type="Gene3D" id="3.40.50.720">
    <property type="entry name" value="NAD(P)-binding Rossmann-like Domain"/>
    <property type="match status" value="1"/>
</dbReference>
<dbReference type="Gene3D" id="3.40.50.261">
    <property type="entry name" value="Succinyl-CoA synthetase domains"/>
    <property type="match status" value="1"/>
</dbReference>
<dbReference type="HAMAP" id="MF_01988">
    <property type="entry name" value="Succ_CoA_alpha"/>
    <property type="match status" value="1"/>
</dbReference>
<dbReference type="InterPro" id="IPR017440">
    <property type="entry name" value="Cit_synth/succinyl-CoA_lig_AS"/>
</dbReference>
<dbReference type="InterPro" id="IPR033847">
    <property type="entry name" value="Citrt_syn/SCS-alpha_CS"/>
</dbReference>
<dbReference type="InterPro" id="IPR003781">
    <property type="entry name" value="CoA-bd"/>
</dbReference>
<dbReference type="InterPro" id="IPR005810">
    <property type="entry name" value="CoA_lig_alpha"/>
</dbReference>
<dbReference type="InterPro" id="IPR036291">
    <property type="entry name" value="NAD(P)-bd_dom_sf"/>
</dbReference>
<dbReference type="InterPro" id="IPR005811">
    <property type="entry name" value="SUCC_ACL_C"/>
</dbReference>
<dbReference type="InterPro" id="IPR016102">
    <property type="entry name" value="Succinyl-CoA_synth-like"/>
</dbReference>
<dbReference type="NCBIfam" id="NF004230">
    <property type="entry name" value="PRK05678.1"/>
    <property type="match status" value="1"/>
</dbReference>
<dbReference type="NCBIfam" id="TIGR01019">
    <property type="entry name" value="sucCoAalpha"/>
    <property type="match status" value="1"/>
</dbReference>
<dbReference type="PANTHER" id="PTHR11117:SF2">
    <property type="entry name" value="SUCCINATE--COA LIGASE [ADP_GDP-FORMING] SUBUNIT ALPHA, MITOCHONDRIAL"/>
    <property type="match status" value="1"/>
</dbReference>
<dbReference type="PANTHER" id="PTHR11117">
    <property type="entry name" value="SUCCINYL-COA LIGASE SUBUNIT ALPHA"/>
    <property type="match status" value="1"/>
</dbReference>
<dbReference type="Pfam" id="PF02629">
    <property type="entry name" value="CoA_binding"/>
    <property type="match status" value="1"/>
</dbReference>
<dbReference type="Pfam" id="PF00549">
    <property type="entry name" value="Ligase_CoA"/>
    <property type="match status" value="1"/>
</dbReference>
<dbReference type="PIRSF" id="PIRSF001553">
    <property type="entry name" value="SucCS_alpha"/>
    <property type="match status" value="1"/>
</dbReference>
<dbReference type="PRINTS" id="PR01798">
    <property type="entry name" value="SCOASYNTHASE"/>
</dbReference>
<dbReference type="SMART" id="SM00881">
    <property type="entry name" value="CoA_binding"/>
    <property type="match status" value="1"/>
</dbReference>
<dbReference type="SUPFAM" id="SSF51735">
    <property type="entry name" value="NAD(P)-binding Rossmann-fold domains"/>
    <property type="match status" value="1"/>
</dbReference>
<dbReference type="SUPFAM" id="SSF52210">
    <property type="entry name" value="Succinyl-CoA synthetase domains"/>
    <property type="match status" value="1"/>
</dbReference>
<dbReference type="PROSITE" id="PS01216">
    <property type="entry name" value="SUCCINYL_COA_LIG_1"/>
    <property type="match status" value="1"/>
</dbReference>
<dbReference type="PROSITE" id="PS00399">
    <property type="entry name" value="SUCCINYL_COA_LIG_2"/>
    <property type="match status" value="1"/>
</dbReference>
<comment type="function">
    <text evidence="2">Succinyl-CoA synthetase functions in the citric acid cycle (TCA), coupling the hydrolysis of succinyl-CoA to the synthesis of either ATP or GTP and thus represents the only step of substrate-level phosphorylation in the TCA. The alpha subunit of the enzyme binds the substrates coenzyme A and phosphate, while succinate binding and specificity for either ATP or GTP is provided by different beta subunits.</text>
</comment>
<comment type="catalytic activity">
    <reaction evidence="2">
        <text>succinate + ATP + CoA = succinyl-CoA + ADP + phosphate</text>
        <dbReference type="Rhea" id="RHEA:17661"/>
        <dbReference type="ChEBI" id="CHEBI:30031"/>
        <dbReference type="ChEBI" id="CHEBI:30616"/>
        <dbReference type="ChEBI" id="CHEBI:43474"/>
        <dbReference type="ChEBI" id="CHEBI:57287"/>
        <dbReference type="ChEBI" id="CHEBI:57292"/>
        <dbReference type="ChEBI" id="CHEBI:456216"/>
        <dbReference type="EC" id="6.2.1.5"/>
    </reaction>
</comment>
<comment type="catalytic activity">
    <reaction evidence="2">
        <text>GTP + succinate + CoA = succinyl-CoA + GDP + phosphate</text>
        <dbReference type="Rhea" id="RHEA:22120"/>
        <dbReference type="ChEBI" id="CHEBI:30031"/>
        <dbReference type="ChEBI" id="CHEBI:37565"/>
        <dbReference type="ChEBI" id="CHEBI:43474"/>
        <dbReference type="ChEBI" id="CHEBI:57287"/>
        <dbReference type="ChEBI" id="CHEBI:57292"/>
        <dbReference type="ChEBI" id="CHEBI:58189"/>
        <dbReference type="EC" id="6.2.1.4"/>
    </reaction>
</comment>
<comment type="pathway">
    <text evidence="2">Carbohydrate metabolism; tricarboxylic acid cycle; succinate from succinyl-CoA (ligase route): step 1/1.</text>
</comment>
<comment type="subunit">
    <text evidence="2">Heterodimer of an alpha and a beta subunit. Different beta subunits determine nucleotide specificity. Together with the ATP-specific beta subunit SUCLA2, forms an ADP-forming succinyl-CoA synthetase (A-SCS). Together with the GTP-specific beta subunit SUCLG2 forms a GDP-forming succinyl-CoA synthetase (G-SCS).</text>
</comment>
<comment type="subcellular location">
    <subcellularLocation>
        <location evidence="2">Mitochondrion</location>
    </subcellularLocation>
</comment>
<comment type="similarity">
    <text evidence="2">Belongs to the succinate/malate CoA ligase alpha subunit family.</text>
</comment>
<gene>
    <name evidence="2" type="primary">SUCLG1</name>
</gene>
<accession>Q58DR8</accession>
<organism>
    <name type="scientific">Bos taurus</name>
    <name type="common">Bovine</name>
    <dbReference type="NCBI Taxonomy" id="9913"/>
    <lineage>
        <taxon>Eukaryota</taxon>
        <taxon>Metazoa</taxon>
        <taxon>Chordata</taxon>
        <taxon>Craniata</taxon>
        <taxon>Vertebrata</taxon>
        <taxon>Euteleostomi</taxon>
        <taxon>Mammalia</taxon>
        <taxon>Eutheria</taxon>
        <taxon>Laurasiatheria</taxon>
        <taxon>Artiodactyla</taxon>
        <taxon>Ruminantia</taxon>
        <taxon>Pecora</taxon>
        <taxon>Bovidae</taxon>
        <taxon>Bovinae</taxon>
        <taxon>Bos</taxon>
    </lineage>
</organism>
<protein>
    <recommendedName>
        <fullName evidence="2">Succinate--CoA ligase [ADP/GDP-forming] subunit alpha, mitochondrial</fullName>
        <ecNumber evidence="2">6.2.1.4</ecNumber>
        <ecNumber evidence="2">6.2.1.5</ecNumber>
    </recommendedName>
    <alternativeName>
        <fullName evidence="2">Succinyl-CoA synthetase subunit alpha</fullName>
        <shortName evidence="2">SCS-alpha</shortName>
    </alternativeName>
</protein>
<sequence>MTAALAAARAAATMASGSSGLAAARLLSRAFLLQQNGIRHCSYTTSRKHLYVDRNTKIICQGFTGKQGTFHSQQALEYGTKLVGGTTPGKGGKTHLGLPVFNTVKEAKEQTGATASVIYVPPPFAVAAIDEAIEAEVSLVVCITEGIPQQDMVRVKHKLLRQGKTRLVGPNCPGVINPGECKIGIMPGHIHKKGRVGIVSRSGTLTYEAVHQTTQVGLGQSLCVGIGGDPFNGTDFTDCLEIFLNDPATEGIILIGEIGGNAEENAAEFLKQHNSGPKAKPVVSFIAGLTAPPGRRMGHAGAIIAGGKGGAKEKIAALQSAGVVVSMSPAQLGTTMYKEFEKRKML</sequence>
<name>SUCA_BOVIN</name>
<keyword id="KW-0007">Acetylation</keyword>
<keyword id="KW-0436">Ligase</keyword>
<keyword id="KW-0496">Mitochondrion</keyword>
<keyword id="KW-0547">Nucleotide-binding</keyword>
<keyword id="KW-1185">Reference proteome</keyword>
<keyword id="KW-0809">Transit peptide</keyword>
<keyword id="KW-0816">Tricarboxylic acid cycle</keyword>
<proteinExistence type="evidence at transcript level"/>